<gene>
    <name type="primary">rpoC1</name>
</gene>
<accession>P42078</accession>
<proteinExistence type="inferred from homology"/>
<evidence type="ECO:0000250" key="1"/>
<evidence type="ECO:0000250" key="2">
    <source>
        <dbReference type="UniProtKB" id="P0A8T7"/>
    </source>
</evidence>
<evidence type="ECO:0000305" key="3"/>
<dbReference type="EC" id="2.7.7.6"/>
<dbReference type="EMBL" id="Z11161">
    <property type="protein sequence ID" value="CAA77512.1"/>
    <property type="molecule type" value="Genomic_DNA"/>
</dbReference>
<dbReference type="PIR" id="S20586">
    <property type="entry name" value="S20586"/>
</dbReference>
<dbReference type="SMR" id="P42078"/>
<dbReference type="GO" id="GO:0000428">
    <property type="term" value="C:DNA-directed RNA polymerase complex"/>
    <property type="evidence" value="ECO:0007669"/>
    <property type="project" value="UniProtKB-KW"/>
</dbReference>
<dbReference type="GO" id="GO:0003677">
    <property type="term" value="F:DNA binding"/>
    <property type="evidence" value="ECO:0007669"/>
    <property type="project" value="InterPro"/>
</dbReference>
<dbReference type="GO" id="GO:0003899">
    <property type="term" value="F:DNA-directed RNA polymerase activity"/>
    <property type="evidence" value="ECO:0007669"/>
    <property type="project" value="UniProtKB-EC"/>
</dbReference>
<dbReference type="GO" id="GO:0046872">
    <property type="term" value="F:metal ion binding"/>
    <property type="evidence" value="ECO:0007669"/>
    <property type="project" value="UniProtKB-KW"/>
</dbReference>
<dbReference type="GO" id="GO:0006351">
    <property type="term" value="P:DNA-templated transcription"/>
    <property type="evidence" value="ECO:0007669"/>
    <property type="project" value="InterPro"/>
</dbReference>
<dbReference type="Gene3D" id="4.10.860.120">
    <property type="entry name" value="RNA polymerase II, clamp domain"/>
    <property type="match status" value="1"/>
</dbReference>
<dbReference type="InterPro" id="IPR045867">
    <property type="entry name" value="DNA-dir_RpoC_beta_prime"/>
</dbReference>
<dbReference type="InterPro" id="IPR007080">
    <property type="entry name" value="RNA_pol_Rpb1_1"/>
</dbReference>
<dbReference type="InterPro" id="IPR044893">
    <property type="entry name" value="RNA_pol_Rpb1_clamp_domain"/>
</dbReference>
<dbReference type="PANTHER" id="PTHR19376">
    <property type="entry name" value="DNA-DIRECTED RNA POLYMERASE"/>
    <property type="match status" value="1"/>
</dbReference>
<dbReference type="PANTHER" id="PTHR19376:SF54">
    <property type="entry name" value="DNA-DIRECTED RNA POLYMERASE SUBUNIT BETA"/>
    <property type="match status" value="1"/>
</dbReference>
<dbReference type="Pfam" id="PF04997">
    <property type="entry name" value="RNA_pol_Rpb1_1"/>
    <property type="match status" value="1"/>
</dbReference>
<dbReference type="SUPFAM" id="SSF64484">
    <property type="entry name" value="beta and beta-prime subunits of DNA dependent RNA-polymerase"/>
    <property type="match status" value="1"/>
</dbReference>
<protein>
    <recommendedName>
        <fullName>DNA-directed RNA polymerase subunit gamma</fullName>
        <shortName>RNAP subunit gamma</shortName>
        <ecNumber>2.7.7.6</ecNumber>
    </recommendedName>
    <alternativeName>
        <fullName>RNA polymerase subunit gamma</fullName>
    </alternativeName>
    <alternativeName>
        <fullName>Transcriptase subunit gamma</fullName>
    </alternativeName>
</protein>
<keyword id="KW-0240">DNA-directed RNA polymerase</keyword>
<keyword id="KW-0479">Metal-binding</keyword>
<keyword id="KW-0548">Nucleotidyltransferase</keyword>
<keyword id="KW-0804">Transcription</keyword>
<keyword id="KW-0808">Transferase</keyword>
<keyword id="KW-0862">Zinc</keyword>
<comment type="function">
    <text evidence="1">DNA-dependent RNA polymerase catalyzes the transcription of DNA into RNA using the four ribonucleoside triphosphates as substrates.</text>
</comment>
<comment type="catalytic activity">
    <reaction evidence="2">
        <text>RNA(n) + a ribonucleoside 5'-triphosphate = RNA(n+1) + diphosphate</text>
        <dbReference type="Rhea" id="RHEA:21248"/>
        <dbReference type="Rhea" id="RHEA-COMP:14527"/>
        <dbReference type="Rhea" id="RHEA-COMP:17342"/>
        <dbReference type="ChEBI" id="CHEBI:33019"/>
        <dbReference type="ChEBI" id="CHEBI:61557"/>
        <dbReference type="ChEBI" id="CHEBI:140395"/>
        <dbReference type="EC" id="2.7.7.6"/>
    </reaction>
</comment>
<comment type="cofactor">
    <cofactor evidence="2">
        <name>Zn(2+)</name>
        <dbReference type="ChEBI" id="CHEBI:29105"/>
    </cofactor>
    <text evidence="2">Binds 1 Zn(2+) ion per subunit.</text>
</comment>
<comment type="subunit">
    <text evidence="1">In cyanobacteria the RNAP catalytic core is composed of 2 alpha, 1 beta, 1 beta', 1 gamma and 1 omega subunit. When a sigma factor is associated with the core the holoenzyme is formed, which can initiate transcription (By similarity).</text>
</comment>
<comment type="similarity">
    <text evidence="3">Belongs to the RNA polymerase beta' chain family. RpoC1 subfamily.</text>
</comment>
<reference key="1">
    <citation type="journal article" date="1992" name="Nature">
        <title>Multiple evolutionary origins of prochlorophytes, the chlorophyll b-containing prokaryotes.</title>
        <authorList>
            <person name="Palenik B."/>
            <person name="Haselkorn R."/>
        </authorList>
    </citation>
    <scope>NUCLEOTIDE SEQUENCE [GENOMIC DNA]</scope>
</reference>
<organism>
    <name type="scientific">Prochloron sp</name>
    <dbReference type="NCBI Taxonomy" id="1215"/>
    <lineage>
        <taxon>Bacteria</taxon>
        <taxon>Bacillati</taxon>
        <taxon>Cyanobacteriota</taxon>
        <taxon>Cyanophyceae</taxon>
        <taxon>Synechococcales</taxon>
        <taxon>Prochloraceae</taxon>
        <taxon>Prochloron</taxon>
    </lineage>
</organism>
<name>RPOC1_PROSC</name>
<sequence>EVTKPETINYRTLKPEMDGLFCERIFGPAKDWECHCGKYKRVRYKGIVCERCGVEVTESKVRRHRMGYIKLAAPVTHVWYLKGIPSYMSIILDMPLRDVEQIVYFNAYVVLDPGNAQNLSYKQLLTEDQWLEIEEQIYGEDSELLGIEVGIGAEAVKRLLEEVDKTSEAEKLRSEIANCKGQKRAKLIKRLRVIDNFVATGSR</sequence>
<feature type="chain" id="PRO_0000067849" description="DNA-directed RNA polymerase subunit gamma">
    <location>
        <begin position="1" status="less than"/>
        <end position="203" status="greater than"/>
    </location>
</feature>
<feature type="binding site" evidence="2">
    <location>
        <position position="34"/>
    </location>
    <ligand>
        <name>Zn(2+)</name>
        <dbReference type="ChEBI" id="CHEBI:29105"/>
    </ligand>
</feature>
<feature type="binding site" evidence="2">
    <location>
        <position position="36"/>
    </location>
    <ligand>
        <name>Zn(2+)</name>
        <dbReference type="ChEBI" id="CHEBI:29105"/>
    </ligand>
</feature>
<feature type="binding site" evidence="2">
    <location>
        <position position="49"/>
    </location>
    <ligand>
        <name>Zn(2+)</name>
        <dbReference type="ChEBI" id="CHEBI:29105"/>
    </ligand>
</feature>
<feature type="binding site" evidence="2">
    <location>
        <position position="52"/>
    </location>
    <ligand>
        <name>Zn(2+)</name>
        <dbReference type="ChEBI" id="CHEBI:29105"/>
    </ligand>
</feature>
<feature type="non-terminal residue">
    <location>
        <position position="1"/>
    </location>
</feature>
<feature type="non-terminal residue">
    <location>
        <position position="203"/>
    </location>
</feature>